<proteinExistence type="inferred from homology"/>
<gene>
    <name type="primary">yqiI</name>
    <name type="ordered locus">b3048</name>
    <name type="ordered locus">JW5509</name>
</gene>
<name>YQII_ECOLI</name>
<keyword id="KW-1185">Reference proteome</keyword>
<keyword id="KW-0732">Signal</keyword>
<sequence>MRYLLIVITFFMGFSSLPAWAMDCYAEHEGGNTVVIGYVPRISIPSDGKKGDKIWQSSEYFMNVFCNNALPGPSPGEEYPSAWANIMMLLASGQDFYNQNSYTFGVTYNGVDYDSTSPLPIAAPVCIDIKGAGTFGNGYKKPAVCSGGPEPQLSVTFPVRVQLYIKLAKNANKVNKKLVLPDEYIALEFKGMSGAGAIEVDKNLTFRIRGLNNIHVLDCFVNVDLEPADGVVDFGKINSRTIKNTSVSETFSVVMTKDPGAACTEQFNILGSFFTTDILSDYSHLDIGNGLLLKIFHNDGTATEFNRFSQFASFSSSSAPSVTAPFRAELSANPAETVVEGPFSKDVILKITYN</sequence>
<protein>
    <recommendedName>
        <fullName>Uncharacterized protein YqiI</fullName>
    </recommendedName>
</protein>
<evidence type="ECO:0000255" key="1"/>
<evidence type="ECO:0000305" key="2"/>
<dbReference type="EMBL" id="U00096">
    <property type="protein sequence ID" value="AAC76084.1"/>
    <property type="molecule type" value="Genomic_DNA"/>
</dbReference>
<dbReference type="EMBL" id="AP009048">
    <property type="protein sequence ID" value="BAE77101.1"/>
    <property type="molecule type" value="Genomic_DNA"/>
</dbReference>
<dbReference type="PIR" id="F65092">
    <property type="entry name" value="F65092"/>
</dbReference>
<dbReference type="RefSeq" id="NP_417520.1">
    <property type="nucleotide sequence ID" value="NC_000913.3"/>
</dbReference>
<dbReference type="RefSeq" id="WP_001269802.1">
    <property type="nucleotide sequence ID" value="NZ_LN832404.1"/>
</dbReference>
<dbReference type="SMR" id="P76656"/>
<dbReference type="BioGRID" id="4259336">
    <property type="interactions" value="125"/>
</dbReference>
<dbReference type="FunCoup" id="P76656">
    <property type="interactions" value="54"/>
</dbReference>
<dbReference type="STRING" id="511145.b3048"/>
<dbReference type="PaxDb" id="511145-b3048"/>
<dbReference type="EnsemblBacteria" id="AAC76084">
    <property type="protein sequence ID" value="AAC76084"/>
    <property type="gene ID" value="b3048"/>
</dbReference>
<dbReference type="GeneID" id="947535"/>
<dbReference type="KEGG" id="ecj:JW5509"/>
<dbReference type="KEGG" id="eco:b3048"/>
<dbReference type="KEGG" id="ecoc:C3026_16645"/>
<dbReference type="PATRIC" id="fig|511145.12.peg.3141"/>
<dbReference type="EchoBASE" id="EB3981"/>
<dbReference type="eggNOG" id="COG3539">
    <property type="taxonomic scope" value="Bacteria"/>
</dbReference>
<dbReference type="HOGENOM" id="CLU_064082_2_0_6"/>
<dbReference type="InParanoid" id="P76656"/>
<dbReference type="OMA" id="CIDVKGA"/>
<dbReference type="OrthoDB" id="8926940at2"/>
<dbReference type="BioCyc" id="EcoCyc:G7587-MONOMER"/>
<dbReference type="PRO" id="PR:P76656"/>
<dbReference type="Proteomes" id="UP000000625">
    <property type="component" value="Chromosome"/>
</dbReference>
<dbReference type="GO" id="GO:0009289">
    <property type="term" value="C:pilus"/>
    <property type="evidence" value="ECO:0007669"/>
    <property type="project" value="InterPro"/>
</dbReference>
<dbReference type="GO" id="GO:0007155">
    <property type="term" value="P:cell adhesion"/>
    <property type="evidence" value="ECO:0007669"/>
    <property type="project" value="InterPro"/>
</dbReference>
<dbReference type="GO" id="GO:0051595">
    <property type="term" value="P:response to methylglyoxal"/>
    <property type="evidence" value="ECO:0000315"/>
    <property type="project" value="EcoCyc"/>
</dbReference>
<dbReference type="FunFam" id="2.60.40.1090:FF:000029">
    <property type="entry name" value="Fimbrial family protein"/>
    <property type="match status" value="1"/>
</dbReference>
<dbReference type="Gene3D" id="2.60.40.1090">
    <property type="entry name" value="Fimbrial-type adhesion domain"/>
    <property type="match status" value="1"/>
</dbReference>
<dbReference type="InterPro" id="IPR036937">
    <property type="entry name" value="Adhesion_dom_fimbrial_sf"/>
</dbReference>
<dbReference type="InterPro" id="IPR008966">
    <property type="entry name" value="Adhesion_dom_sf"/>
</dbReference>
<dbReference type="SUPFAM" id="SSF49401">
    <property type="entry name" value="Bacterial adhesins"/>
    <property type="match status" value="1"/>
</dbReference>
<accession>P76656</accession>
<accession>Q2M9F5</accession>
<organism>
    <name type="scientific">Escherichia coli (strain K12)</name>
    <dbReference type="NCBI Taxonomy" id="83333"/>
    <lineage>
        <taxon>Bacteria</taxon>
        <taxon>Pseudomonadati</taxon>
        <taxon>Pseudomonadota</taxon>
        <taxon>Gammaproteobacteria</taxon>
        <taxon>Enterobacterales</taxon>
        <taxon>Enterobacteriaceae</taxon>
        <taxon>Escherichia</taxon>
    </lineage>
</organism>
<feature type="signal peptide" evidence="1">
    <location>
        <begin position="1"/>
        <end position="21"/>
    </location>
</feature>
<feature type="chain" id="PRO_0000013904" description="Uncharacterized protein YqiI">
    <location>
        <begin position="22"/>
        <end position="354"/>
    </location>
</feature>
<reference key="1">
    <citation type="journal article" date="1997" name="Science">
        <title>The complete genome sequence of Escherichia coli K-12.</title>
        <authorList>
            <person name="Blattner F.R."/>
            <person name="Plunkett G. III"/>
            <person name="Bloch C.A."/>
            <person name="Perna N.T."/>
            <person name="Burland V."/>
            <person name="Riley M."/>
            <person name="Collado-Vides J."/>
            <person name="Glasner J.D."/>
            <person name="Rode C.K."/>
            <person name="Mayhew G.F."/>
            <person name="Gregor J."/>
            <person name="Davis N.W."/>
            <person name="Kirkpatrick H.A."/>
            <person name="Goeden M.A."/>
            <person name="Rose D.J."/>
            <person name="Mau B."/>
            <person name="Shao Y."/>
        </authorList>
    </citation>
    <scope>NUCLEOTIDE SEQUENCE [LARGE SCALE GENOMIC DNA]</scope>
    <source>
        <strain>K12 / MG1655 / ATCC 47076</strain>
    </source>
</reference>
<reference key="2">
    <citation type="journal article" date="2006" name="Mol. Syst. Biol.">
        <title>Highly accurate genome sequences of Escherichia coli K-12 strains MG1655 and W3110.</title>
        <authorList>
            <person name="Hayashi K."/>
            <person name="Morooka N."/>
            <person name="Yamamoto Y."/>
            <person name="Fujita K."/>
            <person name="Isono K."/>
            <person name="Choi S."/>
            <person name="Ohtsubo E."/>
            <person name="Baba T."/>
            <person name="Wanner B.L."/>
            <person name="Mori H."/>
            <person name="Horiuchi T."/>
        </authorList>
    </citation>
    <scope>NUCLEOTIDE SEQUENCE [LARGE SCALE GENOMIC DNA]</scope>
    <source>
        <strain>K12 / W3110 / ATCC 27325 / DSM 5911</strain>
    </source>
</reference>
<comment type="function">
    <text>May be involved in a fimbrial system chaperoned by YqiH and exported by YqiG.</text>
</comment>
<comment type="similarity">
    <text evidence="2">To E.coli YbgO.</text>
</comment>